<evidence type="ECO:0000255" key="1">
    <source>
        <dbReference type="HAMAP-Rule" id="MF_01684"/>
    </source>
</evidence>
<proteinExistence type="inferred from homology"/>
<sequence>MKIGIIGAMEEEVTLLRDKIENRQTISLGGCEIYTGQLNGTEVALLKSGIGKVAAALGATLLLEHCKPDVIINTGSAGGLAPTLKVGDIVVSDEARYHDADVTAFGYEYGQLPGCPAGFKADDKLIAAAEACIAELNLNAVRGLIVSGDAFINGSVGLAKIRHNFPQAIAVEMEATAIAHVCHNFNVPFVVVRAISDVADQQSHLSFDEFLAVAAKQSSLMVESLVQKLAHG</sequence>
<organism>
    <name type="scientific">Escherichia coli O6:H1 (strain CFT073 / ATCC 700928 / UPEC)</name>
    <dbReference type="NCBI Taxonomy" id="199310"/>
    <lineage>
        <taxon>Bacteria</taxon>
        <taxon>Pseudomonadati</taxon>
        <taxon>Pseudomonadota</taxon>
        <taxon>Gammaproteobacteria</taxon>
        <taxon>Enterobacterales</taxon>
        <taxon>Enterobacteriaceae</taxon>
        <taxon>Escherichia</taxon>
    </lineage>
</organism>
<keyword id="KW-0028">Amino-acid biosynthesis</keyword>
<keyword id="KW-0378">Hydrolase</keyword>
<keyword id="KW-0486">Methionine biosynthesis</keyword>
<keyword id="KW-1185">Reference proteome</keyword>
<reference key="1">
    <citation type="journal article" date="2002" name="Proc. Natl. Acad. Sci. U.S.A.">
        <title>Extensive mosaic structure revealed by the complete genome sequence of uropathogenic Escherichia coli.</title>
        <authorList>
            <person name="Welch R.A."/>
            <person name="Burland V."/>
            <person name="Plunkett G. III"/>
            <person name="Redford P."/>
            <person name="Roesch P."/>
            <person name="Rasko D."/>
            <person name="Buckles E.L."/>
            <person name="Liou S.-R."/>
            <person name="Boutin A."/>
            <person name="Hackett J."/>
            <person name="Stroud D."/>
            <person name="Mayhew G.F."/>
            <person name="Rose D.J."/>
            <person name="Zhou S."/>
            <person name="Schwartz D.C."/>
            <person name="Perna N.T."/>
            <person name="Mobley H.L.T."/>
            <person name="Donnenberg M.S."/>
            <person name="Blattner F.R."/>
        </authorList>
    </citation>
    <scope>NUCLEOTIDE SEQUENCE [LARGE SCALE GENOMIC DNA]</scope>
    <source>
        <strain>CFT073 / ATCC 700928 / UPEC</strain>
    </source>
</reference>
<name>MTNN_ECOL6</name>
<comment type="function">
    <text evidence="1">Catalyzes the irreversible cleavage of the glycosidic bond in both 5'-methylthioadenosine (MTA) and S-adenosylhomocysteine (SAH/AdoHcy) to adenine and the corresponding thioribose, 5'-methylthioribose and S-ribosylhomocysteine, respectively. Also cleaves 5'-deoxyadenosine, a toxic by-product of radical S-adenosylmethionine (SAM) enzymes, into 5-deoxyribose and adenine. Thus, is required for in vivo function of the radical SAM enzymes biotin synthase and lipoic acid synthase, that are inhibited by 5'-deoxyadenosine accumulation.</text>
</comment>
<comment type="catalytic activity">
    <reaction evidence="1">
        <text>S-adenosyl-L-homocysteine + H2O = S-(5-deoxy-D-ribos-5-yl)-L-homocysteine + adenine</text>
        <dbReference type="Rhea" id="RHEA:17805"/>
        <dbReference type="ChEBI" id="CHEBI:15377"/>
        <dbReference type="ChEBI" id="CHEBI:16708"/>
        <dbReference type="ChEBI" id="CHEBI:57856"/>
        <dbReference type="ChEBI" id="CHEBI:58195"/>
        <dbReference type="EC" id="3.2.2.9"/>
    </reaction>
</comment>
<comment type="catalytic activity">
    <reaction evidence="1">
        <text>S-methyl-5'-thioadenosine + H2O = 5-(methylsulfanyl)-D-ribose + adenine</text>
        <dbReference type="Rhea" id="RHEA:13617"/>
        <dbReference type="ChEBI" id="CHEBI:15377"/>
        <dbReference type="ChEBI" id="CHEBI:16708"/>
        <dbReference type="ChEBI" id="CHEBI:17509"/>
        <dbReference type="ChEBI" id="CHEBI:78440"/>
        <dbReference type="EC" id="3.2.2.9"/>
    </reaction>
</comment>
<comment type="catalytic activity">
    <reaction evidence="1">
        <text>5'-deoxyadenosine + H2O = 5-deoxy-D-ribose + adenine</text>
        <dbReference type="Rhea" id="RHEA:29859"/>
        <dbReference type="ChEBI" id="CHEBI:15377"/>
        <dbReference type="ChEBI" id="CHEBI:16708"/>
        <dbReference type="ChEBI" id="CHEBI:17319"/>
        <dbReference type="ChEBI" id="CHEBI:149540"/>
        <dbReference type="EC" id="3.2.2.9"/>
    </reaction>
    <physiologicalReaction direction="left-to-right" evidence="1">
        <dbReference type="Rhea" id="RHEA:29860"/>
    </physiologicalReaction>
</comment>
<comment type="pathway">
    <text evidence="1">Amino-acid biosynthesis; L-methionine biosynthesis via salvage pathway; S-methyl-5-thio-alpha-D-ribose 1-phosphate from S-methyl-5'-thioadenosine (hydrolase route): step 1/2.</text>
</comment>
<comment type="subunit">
    <text evidence="1">Homodimer.</text>
</comment>
<comment type="similarity">
    <text evidence="1">Belongs to the PNP/UDP phosphorylase family. MtnN subfamily.</text>
</comment>
<accession>P0AF13</accession>
<accession>P24247</accession>
<protein>
    <recommendedName>
        <fullName evidence="1">5'-methylthioadenosine/S-adenosylhomocysteine nucleosidase</fullName>
        <shortName evidence="1">MTA/SAH nucleosidase</shortName>
        <shortName evidence="1">MTAN</shortName>
        <ecNumber evidence="1">3.2.2.9</ecNumber>
    </recommendedName>
    <alternativeName>
        <fullName evidence="1">5'-deoxyadenosine nucleosidase</fullName>
        <shortName evidence="1">DOA nucleosidase</shortName>
        <shortName evidence="1">dAdo nucleosidase</shortName>
    </alternativeName>
    <alternativeName>
        <fullName evidence="1">5'-methylthioadenosine nucleosidase</fullName>
        <shortName evidence="1">MTA nucleosidase</shortName>
    </alternativeName>
    <alternativeName>
        <fullName evidence="1">S-adenosylhomocysteine nucleosidase</fullName>
        <shortName evidence="1">AdoHcy nucleosidase</shortName>
        <shortName evidence="1">SAH nucleosidase</shortName>
        <shortName evidence="1">SRH nucleosidase</shortName>
    </alternativeName>
</protein>
<gene>
    <name evidence="1" type="primary">mtnN</name>
    <name type="ordered locus">c0195</name>
</gene>
<dbReference type="EC" id="3.2.2.9" evidence="1"/>
<dbReference type="EMBL" id="AE014075">
    <property type="protein sequence ID" value="AAN78689.1"/>
    <property type="molecule type" value="Genomic_DNA"/>
</dbReference>
<dbReference type="RefSeq" id="WP_000689844.1">
    <property type="nucleotide sequence ID" value="NZ_CP051263.1"/>
</dbReference>
<dbReference type="SMR" id="P0AF13"/>
<dbReference type="STRING" id="199310.c0195"/>
<dbReference type="GeneID" id="93777267"/>
<dbReference type="KEGG" id="ecc:c0195"/>
<dbReference type="eggNOG" id="COG0775">
    <property type="taxonomic scope" value="Bacteria"/>
</dbReference>
<dbReference type="HOGENOM" id="CLU_031248_2_2_6"/>
<dbReference type="BioCyc" id="ECOL199310:C0195-MONOMER"/>
<dbReference type="UniPathway" id="UPA00904">
    <property type="reaction ID" value="UER00871"/>
</dbReference>
<dbReference type="Proteomes" id="UP000001410">
    <property type="component" value="Chromosome"/>
</dbReference>
<dbReference type="GO" id="GO:0005829">
    <property type="term" value="C:cytosol"/>
    <property type="evidence" value="ECO:0007669"/>
    <property type="project" value="TreeGrafter"/>
</dbReference>
<dbReference type="GO" id="GO:0008782">
    <property type="term" value="F:adenosylhomocysteine nucleosidase activity"/>
    <property type="evidence" value="ECO:0007669"/>
    <property type="project" value="UniProtKB-UniRule"/>
</dbReference>
<dbReference type="GO" id="GO:0008930">
    <property type="term" value="F:methylthioadenosine nucleosidase activity"/>
    <property type="evidence" value="ECO:0007669"/>
    <property type="project" value="UniProtKB-UniRule"/>
</dbReference>
<dbReference type="GO" id="GO:0019509">
    <property type="term" value="P:L-methionine salvage from methylthioadenosine"/>
    <property type="evidence" value="ECO:0007669"/>
    <property type="project" value="UniProtKB-UniRule"/>
</dbReference>
<dbReference type="GO" id="GO:0019284">
    <property type="term" value="P:L-methionine salvage from S-adenosylmethionine"/>
    <property type="evidence" value="ECO:0007669"/>
    <property type="project" value="TreeGrafter"/>
</dbReference>
<dbReference type="GO" id="GO:0046124">
    <property type="term" value="P:purine deoxyribonucleoside catabolic process"/>
    <property type="evidence" value="ECO:0007669"/>
    <property type="project" value="UniProtKB-UniRule"/>
</dbReference>
<dbReference type="CDD" id="cd09008">
    <property type="entry name" value="MTAN"/>
    <property type="match status" value="1"/>
</dbReference>
<dbReference type="FunFam" id="3.40.50.1580:FF:000001">
    <property type="entry name" value="MTA/SAH nucleosidase family protein"/>
    <property type="match status" value="1"/>
</dbReference>
<dbReference type="Gene3D" id="3.40.50.1580">
    <property type="entry name" value="Nucleoside phosphorylase domain"/>
    <property type="match status" value="1"/>
</dbReference>
<dbReference type="HAMAP" id="MF_01684">
    <property type="entry name" value="Salvage_MtnN"/>
    <property type="match status" value="1"/>
</dbReference>
<dbReference type="InterPro" id="IPR010049">
    <property type="entry name" value="MTA_SAH_Nsdase"/>
</dbReference>
<dbReference type="InterPro" id="IPR000845">
    <property type="entry name" value="Nucleoside_phosphorylase_d"/>
</dbReference>
<dbReference type="InterPro" id="IPR035994">
    <property type="entry name" value="Nucleoside_phosphorylase_sf"/>
</dbReference>
<dbReference type="NCBIfam" id="TIGR01704">
    <property type="entry name" value="MTA_SAH-Nsdase"/>
    <property type="match status" value="1"/>
</dbReference>
<dbReference type="NCBIfam" id="NF004079">
    <property type="entry name" value="PRK05584.1"/>
    <property type="match status" value="1"/>
</dbReference>
<dbReference type="PANTHER" id="PTHR46832">
    <property type="entry name" value="5'-METHYLTHIOADENOSINE/S-ADENOSYLHOMOCYSTEINE NUCLEOSIDASE"/>
    <property type="match status" value="1"/>
</dbReference>
<dbReference type="PANTHER" id="PTHR46832:SF1">
    <property type="entry name" value="5'-METHYLTHIOADENOSINE_S-ADENOSYLHOMOCYSTEINE NUCLEOSIDASE"/>
    <property type="match status" value="1"/>
</dbReference>
<dbReference type="Pfam" id="PF01048">
    <property type="entry name" value="PNP_UDP_1"/>
    <property type="match status" value="1"/>
</dbReference>
<dbReference type="SUPFAM" id="SSF53167">
    <property type="entry name" value="Purine and uridine phosphorylases"/>
    <property type="match status" value="1"/>
</dbReference>
<feature type="chain" id="PRO_0000164441" description="5'-methylthioadenosine/S-adenosylhomocysteine nucleosidase">
    <location>
        <begin position="1"/>
        <end position="232"/>
    </location>
</feature>
<feature type="active site" description="Proton acceptor" evidence="1">
    <location>
        <position position="12"/>
    </location>
</feature>
<feature type="active site" description="Proton donor" evidence="1">
    <location>
        <position position="197"/>
    </location>
</feature>
<feature type="binding site" evidence="1">
    <location>
        <position position="78"/>
    </location>
    <ligand>
        <name>substrate</name>
    </ligand>
</feature>
<feature type="binding site" evidence="1">
    <location>
        <position position="152"/>
    </location>
    <ligand>
        <name>substrate</name>
    </ligand>
</feature>
<feature type="binding site" evidence="1">
    <location>
        <begin position="173"/>
        <end position="174"/>
    </location>
    <ligand>
        <name>substrate</name>
    </ligand>
</feature>